<keyword id="KW-0027">Amidation</keyword>
<keyword id="KW-0044">Antibiotic</keyword>
<keyword id="KW-0929">Antimicrobial</keyword>
<keyword id="KW-0391">Immunity</keyword>
<keyword id="KW-0399">Innate immunity</keyword>
<keyword id="KW-0472">Membrane</keyword>
<keyword id="KW-1185">Reference proteome</keyword>
<keyword id="KW-0964">Secreted</keyword>
<keyword id="KW-0732">Signal</keyword>
<keyword id="KW-1052">Target cell membrane</keyword>
<keyword id="KW-1053">Target membrane</keyword>
<evidence type="ECO:0000250" key="1">
    <source>
        <dbReference type="UniProtKB" id="D2XUU4"/>
    </source>
</evidence>
<evidence type="ECO:0000255" key="2"/>
<evidence type="ECO:0000303" key="3">
    <source>
    </source>
</evidence>
<evidence type="ECO:0000305" key="4"/>
<evidence type="ECO:0000312" key="5">
    <source>
        <dbReference type="EMBL" id="ADB56981.1"/>
    </source>
</evidence>
<feature type="signal peptide" evidence="2">
    <location>
        <begin position="1"/>
        <end position="18"/>
    </location>
</feature>
<feature type="propeptide" id="PRO_0000461969" evidence="1">
    <location>
        <begin position="19"/>
        <end position="57"/>
    </location>
</feature>
<feature type="peptide" id="PRO_5003039176" description="Arminin 2b" evidence="1">
    <location>
        <begin position="58"/>
        <end position="82"/>
    </location>
</feature>
<feature type="modified residue" description="Alanine amide" evidence="1">
    <location>
        <position position="82"/>
    </location>
</feature>
<organism>
    <name type="scientific">Hydra vulgaris</name>
    <name type="common">Hydra</name>
    <name type="synonym">Hydra attenuata</name>
    <dbReference type="NCBI Taxonomy" id="6087"/>
    <lineage>
        <taxon>Eukaryota</taxon>
        <taxon>Metazoa</taxon>
        <taxon>Cnidaria</taxon>
        <taxon>Hydrozoa</taxon>
        <taxon>Hydroidolina</taxon>
        <taxon>Anthoathecata</taxon>
        <taxon>Aplanulata</taxon>
        <taxon>Hydridae</taxon>
        <taxon>Hydra</taxon>
    </lineage>
</organism>
<accession>D2XUU8</accession>
<protein>
    <recommendedName>
        <fullName evidence="3">Arminin 2b</fullName>
    </recommendedName>
</protein>
<reference evidence="5" key="1">
    <citation type="journal article" date="2009" name="Antimicrob. Agents Chemother.">
        <title>Activity of the novel peptide arminin against multiresistant human pathogens shows the considerable potential of phylogenetically ancient organisms as drug sources.</title>
        <authorList>
            <person name="Augustin R."/>
            <person name="Anton-Erxleben F."/>
            <person name="Jungnickel S."/>
            <person name="Hemmrich G."/>
            <person name="Spudy B."/>
            <person name="Podschun R."/>
            <person name="Bosch T.C."/>
        </authorList>
    </citation>
    <scope>NUCLEOTIDE SEQUENCE [MRNA]</scope>
    <source>
        <strain>AEP</strain>
    </source>
</reference>
<name>ARM2B_HYDVU</name>
<proteinExistence type="inferred from homology"/>
<sequence>MKTVFAILFLAFIALTYARSYEDVKEEIKNEIEKEILEDLEEESDELNDKSKEINDAKPWRWVRRIRWRKLVPYIPAVVAAAGKK</sequence>
<dbReference type="EMBL" id="GU256278">
    <property type="protein sequence ID" value="ADB56981.1"/>
    <property type="molecule type" value="mRNA"/>
</dbReference>
<dbReference type="Proteomes" id="UP000694840">
    <property type="component" value="Unplaced"/>
</dbReference>
<dbReference type="GO" id="GO:0005576">
    <property type="term" value="C:extracellular region"/>
    <property type="evidence" value="ECO:0007669"/>
    <property type="project" value="UniProtKB-SubCell"/>
</dbReference>
<comment type="function">
    <text evidence="1">Antimicrobial peptide with a broad-spectrum antimicrobial activity. Keeps its antibacterial activity under a wide range of salt concentrations that mimic physiological conditions of human blood, which is surprising, since Hydra is an obligate freshwater animal with nearly no salt tolerance. Does not affect red blood cells.</text>
</comment>
<comment type="subcellular location">
    <subcellularLocation>
        <location evidence="1">Secreted</location>
    </subcellularLocation>
    <subcellularLocation>
        <location evidence="1">Target cell membrane</location>
    </subcellularLocation>
</comment>
<comment type="tissue specificity">
    <text evidence="1">Expressed in entodermal epithelium along the body column.</text>
</comment>
<comment type="similarity">
    <text evidence="4">Belongs to the arminin family.</text>
</comment>